<dbReference type="EMBL" id="AJ749949">
    <property type="protein sequence ID" value="CAG44786.1"/>
    <property type="molecule type" value="Genomic_DNA"/>
</dbReference>
<dbReference type="RefSeq" id="WP_003019923.1">
    <property type="nucleotide sequence ID" value="NC_006570.2"/>
</dbReference>
<dbReference type="RefSeq" id="YP_169219.1">
    <property type="nucleotide sequence ID" value="NC_006570.2"/>
</dbReference>
<dbReference type="SMR" id="Q5NIC3"/>
<dbReference type="STRING" id="177416.FTT_0153"/>
<dbReference type="DNASU" id="3192004"/>
<dbReference type="EnsemblBacteria" id="CAG44786">
    <property type="protein sequence ID" value="CAG44786"/>
    <property type="gene ID" value="FTT_0153"/>
</dbReference>
<dbReference type="KEGG" id="ftu:FTT_0153"/>
<dbReference type="eggNOG" id="COG0335">
    <property type="taxonomic scope" value="Bacteria"/>
</dbReference>
<dbReference type="OrthoDB" id="9803541at2"/>
<dbReference type="Proteomes" id="UP000001174">
    <property type="component" value="Chromosome"/>
</dbReference>
<dbReference type="GO" id="GO:0022625">
    <property type="term" value="C:cytosolic large ribosomal subunit"/>
    <property type="evidence" value="ECO:0007669"/>
    <property type="project" value="TreeGrafter"/>
</dbReference>
<dbReference type="GO" id="GO:0003735">
    <property type="term" value="F:structural constituent of ribosome"/>
    <property type="evidence" value="ECO:0007669"/>
    <property type="project" value="InterPro"/>
</dbReference>
<dbReference type="GO" id="GO:0006412">
    <property type="term" value="P:translation"/>
    <property type="evidence" value="ECO:0007669"/>
    <property type="project" value="UniProtKB-UniRule"/>
</dbReference>
<dbReference type="FunFam" id="2.30.30.790:FF:000001">
    <property type="entry name" value="50S ribosomal protein L19"/>
    <property type="match status" value="1"/>
</dbReference>
<dbReference type="Gene3D" id="2.30.30.790">
    <property type="match status" value="1"/>
</dbReference>
<dbReference type="HAMAP" id="MF_00402">
    <property type="entry name" value="Ribosomal_bL19"/>
    <property type="match status" value="1"/>
</dbReference>
<dbReference type="InterPro" id="IPR001857">
    <property type="entry name" value="Ribosomal_bL19"/>
</dbReference>
<dbReference type="InterPro" id="IPR018257">
    <property type="entry name" value="Ribosomal_bL19_CS"/>
</dbReference>
<dbReference type="InterPro" id="IPR038657">
    <property type="entry name" value="Ribosomal_bL19_sf"/>
</dbReference>
<dbReference type="InterPro" id="IPR008991">
    <property type="entry name" value="Translation_prot_SH3-like_sf"/>
</dbReference>
<dbReference type="NCBIfam" id="TIGR01024">
    <property type="entry name" value="rplS_bact"/>
    <property type="match status" value="1"/>
</dbReference>
<dbReference type="PANTHER" id="PTHR15680:SF9">
    <property type="entry name" value="LARGE RIBOSOMAL SUBUNIT PROTEIN BL19M"/>
    <property type="match status" value="1"/>
</dbReference>
<dbReference type="PANTHER" id="PTHR15680">
    <property type="entry name" value="RIBOSOMAL PROTEIN L19"/>
    <property type="match status" value="1"/>
</dbReference>
<dbReference type="Pfam" id="PF01245">
    <property type="entry name" value="Ribosomal_L19"/>
    <property type="match status" value="1"/>
</dbReference>
<dbReference type="PIRSF" id="PIRSF002191">
    <property type="entry name" value="Ribosomal_L19"/>
    <property type="match status" value="1"/>
</dbReference>
<dbReference type="PRINTS" id="PR00061">
    <property type="entry name" value="RIBOSOMALL19"/>
</dbReference>
<dbReference type="SUPFAM" id="SSF50104">
    <property type="entry name" value="Translation proteins SH3-like domain"/>
    <property type="match status" value="1"/>
</dbReference>
<dbReference type="PROSITE" id="PS01015">
    <property type="entry name" value="RIBOSOMAL_L19"/>
    <property type="match status" value="1"/>
</dbReference>
<comment type="function">
    <text evidence="1">This protein is located at the 30S-50S ribosomal subunit interface and may play a role in the structure and function of the aminoacyl-tRNA binding site.</text>
</comment>
<comment type="similarity">
    <text evidence="1">Belongs to the bacterial ribosomal protein bL19 family.</text>
</comment>
<proteinExistence type="inferred from homology"/>
<feature type="chain" id="PRO_0000163456" description="Large ribosomal subunit protein bL19">
    <location>
        <begin position="1"/>
        <end position="115"/>
    </location>
</feature>
<accession>Q5NIC3</accession>
<protein>
    <recommendedName>
        <fullName evidence="1">Large ribosomal subunit protein bL19</fullName>
    </recommendedName>
    <alternativeName>
        <fullName evidence="2">50S ribosomal protein L19</fullName>
    </alternativeName>
</protein>
<organism>
    <name type="scientific">Francisella tularensis subsp. tularensis (strain SCHU S4 / Schu 4)</name>
    <dbReference type="NCBI Taxonomy" id="177416"/>
    <lineage>
        <taxon>Bacteria</taxon>
        <taxon>Pseudomonadati</taxon>
        <taxon>Pseudomonadota</taxon>
        <taxon>Gammaproteobacteria</taxon>
        <taxon>Thiotrichales</taxon>
        <taxon>Francisellaceae</taxon>
        <taxon>Francisella</taxon>
    </lineage>
</organism>
<reference key="1">
    <citation type="journal article" date="2005" name="Nat. Genet.">
        <title>The complete genome sequence of Francisella tularensis, the causative agent of tularemia.</title>
        <authorList>
            <person name="Larsson P."/>
            <person name="Oyston P.C.F."/>
            <person name="Chain P."/>
            <person name="Chu M.C."/>
            <person name="Duffield M."/>
            <person name="Fuxelius H.-H."/>
            <person name="Garcia E."/>
            <person name="Haelltorp G."/>
            <person name="Johansson D."/>
            <person name="Isherwood K.E."/>
            <person name="Karp P.D."/>
            <person name="Larsson E."/>
            <person name="Liu Y."/>
            <person name="Michell S."/>
            <person name="Prior J."/>
            <person name="Prior R."/>
            <person name="Malfatti S."/>
            <person name="Sjoestedt A."/>
            <person name="Svensson K."/>
            <person name="Thompson N."/>
            <person name="Vergez L."/>
            <person name="Wagg J.K."/>
            <person name="Wren B.W."/>
            <person name="Lindler L.E."/>
            <person name="Andersson S.G.E."/>
            <person name="Forsman M."/>
            <person name="Titball R.W."/>
        </authorList>
    </citation>
    <scope>NUCLEOTIDE SEQUENCE [LARGE SCALE GENOMIC DNA]</scope>
    <source>
        <strain>SCHU S4 / Schu 4</strain>
    </source>
</reference>
<evidence type="ECO:0000255" key="1">
    <source>
        <dbReference type="HAMAP-Rule" id="MF_00402"/>
    </source>
</evidence>
<evidence type="ECO:0000305" key="2"/>
<sequence>MKNKFVELVEKSQLRTDLPEFNPGDSITVNLWIKEGDKQRIQAFKGFVLRKRNRGLHSAFTVRKMSSGMGVERTFQTHSPLIDSIIVEKRADVRRAKLYYMRGLTGRAARIKEKV</sequence>
<gene>
    <name evidence="1" type="primary">rplS</name>
    <name type="ordered locus">FTT_0153</name>
</gene>
<name>RL19_FRATT</name>
<keyword id="KW-1185">Reference proteome</keyword>
<keyword id="KW-0687">Ribonucleoprotein</keyword>
<keyword id="KW-0689">Ribosomal protein</keyword>